<protein>
    <recommendedName>
        <fullName evidence="8">Eremophilane O-acetyltransferase ORF8</fullName>
        <ecNumber evidence="11">2.3.1.-</ecNumber>
    </recommendedName>
    <alternativeName>
        <fullName evidence="8">PR-toxin biosynthesis cluster protein 8</fullName>
    </alternativeName>
</protein>
<evidence type="ECO:0000250" key="1">
    <source>
        <dbReference type="UniProtKB" id="Q4WZ64"/>
    </source>
</evidence>
<evidence type="ECO:0000269" key="2">
    <source>
    </source>
</evidence>
<evidence type="ECO:0000269" key="3">
    <source>
    </source>
</evidence>
<evidence type="ECO:0000269" key="4">
    <source>
    </source>
</evidence>
<evidence type="ECO:0000269" key="5">
    <source>
    </source>
</evidence>
<evidence type="ECO:0000269" key="6">
    <source>
    </source>
</evidence>
<evidence type="ECO:0000269" key="7">
    <source>
    </source>
</evidence>
<evidence type="ECO:0000303" key="8">
    <source>
    </source>
</evidence>
<evidence type="ECO:0000305" key="9"/>
<evidence type="ECO:0000305" key="10">
    <source>
    </source>
</evidence>
<evidence type="ECO:0000305" key="11">
    <source>
    </source>
</evidence>
<name>PRX11_PENRF</name>
<keyword id="KW-0012">Acyltransferase</keyword>
<keyword id="KW-1185">Reference proteome</keyword>
<keyword id="KW-0808">Transferase</keyword>
<comment type="function">
    <text evidence="2 3 4 5 6 7">O-acetyltransferase; part of the gene cluster that mediates the biosynthesis of PR-toxin, a bicyclic sesquiterpene belonging to the eremophilane class and acting as a mycotoxin (PubMed:24239699, PubMed:27921136). The first step of the pathway is catalyzed by the aristolochene synthase which performs the cyclization of trans,trans-farnesyl diphosphate (FPP) to the bicyclic sesquiterpene aristolochene (PubMed:15186158, PubMed:24239699, PubMed:8440737). Following the formation of aristolochene, the non-oxygenated aristolochene is converted to the trioxygenated intermediate eremofortin B, via 7-epi-neopetasone (PubMed:24239699, PubMed:26274339). This conversion appears to involve three enzymes, a hydroxysterol oxidase-like enzyme, the quinone-oxidase prx3 that forms the quinone-type-structure in the bicyclic nucleus of aristolochene with the C8-oxo group and the C-3 hydroxyl group, and the P450 monooxygenase ORF6 that introduces the epoxide at the double bond between carbons 1 and 2 (PubMed:24239699, PubMed:27921136). No monoxy or dioxy-intermediates have been reported to be released to the broth, so these three early oxidative reactions may be coupled together (PubMed:24239699). Eremofortin B is further oxidized by another P450 monooxygenase, that introduces a second epoxide between carbons 7 and 11 prior to acetylation to eremofortin A by the acetyltransferase ORF8 (PubMed:16345540, PubMed:24239699, PubMed:27921136). The second epoxidation may be performed by a second P450 monooxygenase (PubMed:24239699). After the acetylation step, eremofortin A is converted to eremofortin C and then to PR-toxin (PubMed:24239699). First the conversion of eremofortin A to eremofortin C proceeds by oxidation of the side chain of the molecule at C-12 and is catalyzed by the short-chain oxidoreductase prx1 (PubMed:16345540, PubMed:24239699). The cytochrome P450 monooxygenase ORF6 is probably also involved in this step (PubMed:27921136). The primary alcohol formed at C-12 is finally oxidized by the short-chain alcohol dehydrogenase prx4 that forms PR-toxin (PubMed:16345540, PubMed:24239699).</text>
</comment>
<comment type="pathway">
    <text evidence="6 10">Sesquiterpene biosynthesis.</text>
</comment>
<comment type="subunit">
    <text evidence="1">Monomer.</text>
</comment>
<comment type="disruption phenotype">
    <text evidence="6">Impairs the production of PR-toxin as well as of the intermediate eremofortin A, but accumulates eremofortin B.</text>
</comment>
<comment type="similarity">
    <text evidence="9">Belongs to the fumigaclavine B O-acetyltransferase family.</text>
</comment>
<dbReference type="EC" id="2.3.1.-" evidence="11"/>
<dbReference type="EMBL" id="HG792016">
    <property type="protein sequence ID" value="CDM31322.1"/>
    <property type="molecule type" value="Genomic_DNA"/>
</dbReference>
<dbReference type="SMR" id="W6QP10"/>
<dbReference type="STRING" id="1365484.W6QP10"/>
<dbReference type="OMA" id="RMPRGQF"/>
<dbReference type="OrthoDB" id="1862401at2759"/>
<dbReference type="Proteomes" id="UP000030686">
    <property type="component" value="Unassembled WGS sequence"/>
</dbReference>
<dbReference type="GO" id="GO:0016747">
    <property type="term" value="F:acyltransferase activity, transferring groups other than amino-acyl groups"/>
    <property type="evidence" value="ECO:0007669"/>
    <property type="project" value="TreeGrafter"/>
</dbReference>
<dbReference type="Gene3D" id="3.30.559.10">
    <property type="entry name" value="Chloramphenicol acetyltransferase-like domain"/>
    <property type="match status" value="2"/>
</dbReference>
<dbReference type="InterPro" id="IPR023213">
    <property type="entry name" value="CAT-like_dom_sf"/>
</dbReference>
<dbReference type="InterPro" id="IPR050317">
    <property type="entry name" value="Plant_Fungal_Acyltransferase"/>
</dbReference>
<dbReference type="InterPro" id="IPR054710">
    <property type="entry name" value="Tri101-like_N"/>
</dbReference>
<dbReference type="PANTHER" id="PTHR31642:SF270">
    <property type="entry name" value="O-ACYLTRANSFERASE AUSQ"/>
    <property type="match status" value="1"/>
</dbReference>
<dbReference type="PANTHER" id="PTHR31642">
    <property type="entry name" value="TRICHOTHECENE 3-O-ACETYLTRANSFERASE"/>
    <property type="match status" value="1"/>
</dbReference>
<dbReference type="Pfam" id="PF02458">
    <property type="entry name" value="Transferase"/>
    <property type="match status" value="1"/>
</dbReference>
<dbReference type="Pfam" id="PF22664">
    <property type="entry name" value="TRI-like_N"/>
    <property type="match status" value="1"/>
</dbReference>
<gene>
    <name evidence="8" type="primary">ORF8</name>
    <name type="ORF">PROQFM164_S02g001472</name>
</gene>
<organism>
    <name type="scientific">Penicillium roqueforti (strain FM164)</name>
    <dbReference type="NCBI Taxonomy" id="1365484"/>
    <lineage>
        <taxon>Eukaryota</taxon>
        <taxon>Fungi</taxon>
        <taxon>Dikarya</taxon>
        <taxon>Ascomycota</taxon>
        <taxon>Pezizomycotina</taxon>
        <taxon>Eurotiomycetes</taxon>
        <taxon>Eurotiomycetidae</taxon>
        <taxon>Eurotiales</taxon>
        <taxon>Aspergillaceae</taxon>
        <taxon>Penicillium</taxon>
    </lineage>
</organism>
<accession>W6QP10</accession>
<proteinExistence type="inferred from homology"/>
<feature type="chain" id="PRO_0000451229" description="Eremophilane O-acetyltransferase ORF8">
    <location>
        <begin position="1"/>
        <end position="471"/>
    </location>
</feature>
<sequence>MYELQQHRKFSALDEMLPAFYYCYLLCFPVSSDNRASTSELLQTSLSSLAEERPYLTGTVRRDMESSVRKGHLILDIPNPFEDLRIVFNDLTGPKSQWKETYQDLKDTGMPPHKLDANLLAPLTAGIGETRKVMSVQANFIHGGLLIAFCFHHNFVDAYGAGRIIARFSDHCNGTVDLKNSADPEGDGTDSRGIADLLDVELLKKQYKFEDLESDPNLWRLNCLEFRGVNDFRWPDFIPALLPVRKPPVISSMFSFSSDALAEIKAMAQPNQSGAWVSTNDALVAFLWRHTMRARFPSSRTESEPPNRKSNVVVALDGRKDLSISPTYIGNCLFHCFTDLPINMVGSESTHLGDIAIKVRQTITAARNKTLLKAVVGLAATHPDCQTIKYANDNLGPDLYVTSWIDLPFYKLEWGPLGKTEFFRIPDRQFESLCCILPPKDGVVQLITSMEEDHSKRLRSDAEFTRFATYR</sequence>
<reference key="1">
    <citation type="journal article" date="2014" name="Nat. Commun.">
        <title>Multiple recent horizontal transfers of a large genomic region in cheese making fungi.</title>
        <authorList>
            <person name="Cheeseman K."/>
            <person name="Ropars J."/>
            <person name="Renault P."/>
            <person name="Dupont J."/>
            <person name="Gouzy J."/>
            <person name="Branca A."/>
            <person name="Abraham A.-L."/>
            <person name="Ceppi M."/>
            <person name="Conseiller E."/>
            <person name="Debuchy R."/>
            <person name="Malagnac F."/>
            <person name="Goarin A."/>
            <person name="Silar P."/>
            <person name="Lacoste S."/>
            <person name="Sallet E."/>
            <person name="Bensimon A."/>
            <person name="Giraud T."/>
            <person name="Brygoo Y."/>
        </authorList>
    </citation>
    <scope>NUCLEOTIDE SEQUENCE [LARGE SCALE GENOMIC DNA]</scope>
    <source>
        <strain>FM164</strain>
    </source>
</reference>
<reference key="2">
    <citation type="journal article" date="1980" name="Appl. Environ. Microbiol.">
        <title>Production of eremofortins A, B, and C relative to formation of PR toxin by Penicillium roqueforti.</title>
        <authorList>
            <person name="Moreau S."/>
            <person name="Lablache-Combier A."/>
            <person name="Biguet J."/>
        </authorList>
    </citation>
    <scope>FUNCTION</scope>
</reference>
<reference key="3">
    <citation type="journal article" date="1993" name="J. Biol. Chem.">
        <title>Aristolochene synthase. Isolation, characterization, and bacterial expression of a sesquiterpenoid biosynthetic gene (Ari1) from Penicillium roqueforti.</title>
        <authorList>
            <person name="Proctor R.H."/>
            <person name="Hohn T.M."/>
        </authorList>
    </citation>
    <scope>FUNCTION</scope>
</reference>
<reference key="4">
    <citation type="journal article" date="2004" name="J. Am. Chem. Soc.">
        <title>Aristolochene synthase: mechanistic analysis of active site residues by site-directed mutagenesis.</title>
        <authorList>
            <person name="Felicetti B."/>
            <person name="Cane D.E."/>
        </authorList>
    </citation>
    <scope>FUNCTION</scope>
</reference>
<reference key="5">
    <citation type="journal article" date="2014" name="Fungal Genet. Biol.">
        <title>Molecular characterization of the PR-toxin gene cluster in Penicillium roqueforti and Penicillium chrysogenum: cross talk of secondary metabolite pathways.</title>
        <authorList>
            <person name="Hidalgo P.I."/>
            <person name="Ullan R.V."/>
            <person name="Albillos S.M."/>
            <person name="Montero O."/>
            <person name="Fernandez-Bodega M.A."/>
            <person name="Garcia-Estrada C."/>
            <person name="Fernandez-Aguado M."/>
            <person name="Martin J.F."/>
        </authorList>
    </citation>
    <scope>FUNCTION</scope>
</reference>
<reference key="6">
    <citation type="journal article" date="2015" name="Angew. Chem. Int. Ed.">
        <title>Identification of intermediates in the biosynthesis of PR toxin by Penicillium roqueforti.</title>
        <authorList>
            <person name="Riclea R."/>
            <person name="Dickschat J.S."/>
        </authorList>
    </citation>
    <scope>FUNCTION</scope>
</reference>
<reference key="7">
    <citation type="journal article" date="2017" name="Appl. Microbiol. Biotechnol.">
        <title>Penicillium roqueforti PR toxin gene cluster characterization.</title>
        <authorList>
            <person name="Hidalgo P.I."/>
            <person name="Poirier E."/>
            <person name="Ullan R.V."/>
            <person name="Piqueras J."/>
            <person name="Meslet-Cladiere L."/>
            <person name="Coton E."/>
            <person name="Coton M."/>
        </authorList>
    </citation>
    <scope>FUNCTION</scope>
    <scope>DISRUPTION PHENOTYPE</scope>
    <scope>PATHWAY</scope>
</reference>